<comment type="function">
    <text evidence="4">Probable transporter of an ATP-driven Fe(2+) uptake system.</text>
</comment>
<comment type="subcellular location">
    <subcellularLocation>
        <location evidence="1">Cell inner membrane</location>
        <topology evidence="1">Multi-pass membrane protein</topology>
    </subcellularLocation>
</comment>
<comment type="disruption phenotype">
    <text evidence="4">Cells are unable to colonize the gastric mucosa of mice.</text>
</comment>
<comment type="similarity">
    <text evidence="3">Belongs to the TRAFAC class TrmE-Era-EngA-EngB-Septin-like GTPase superfamily. FeoB GTPase (TC 9.A.8) family.</text>
</comment>
<protein>
    <recommendedName>
        <fullName evidence="5">Fe(2+) transporter FeoB</fullName>
    </recommendedName>
    <alternativeName>
        <fullName>Ferrous iron transport protein B</fullName>
    </alternativeName>
</protein>
<dbReference type="EMBL" id="AE000511">
    <property type="protein sequence ID" value="AAD07741.1"/>
    <property type="molecule type" value="Genomic_DNA"/>
</dbReference>
<dbReference type="PIR" id="G64605">
    <property type="entry name" value="G64605"/>
</dbReference>
<dbReference type="RefSeq" id="NP_207481.1">
    <property type="nucleotide sequence ID" value="NC_000915.1"/>
</dbReference>
<dbReference type="RefSeq" id="WP_000659176.1">
    <property type="nucleotide sequence ID" value="NC_018939.1"/>
</dbReference>
<dbReference type="SMR" id="O25396"/>
<dbReference type="DIP" id="DIP-3079N"/>
<dbReference type="FunCoup" id="O25396">
    <property type="interactions" value="119"/>
</dbReference>
<dbReference type="IntAct" id="O25396">
    <property type="interactions" value="19"/>
</dbReference>
<dbReference type="MINT" id="O25396"/>
<dbReference type="STRING" id="85962.HP_0687"/>
<dbReference type="TCDB" id="9.A.8.1.2">
    <property type="family name" value="the ferrous iron uptake (feob) family"/>
</dbReference>
<dbReference type="PaxDb" id="85962-C694_03545"/>
<dbReference type="EnsemblBacteria" id="AAD07741">
    <property type="protein sequence ID" value="AAD07741"/>
    <property type="gene ID" value="HP_0687"/>
</dbReference>
<dbReference type="KEGG" id="heo:C694_03545"/>
<dbReference type="KEGG" id="hpy:HP_0687"/>
<dbReference type="PATRIC" id="fig|85962.47.peg.736"/>
<dbReference type="eggNOG" id="COG0370">
    <property type="taxonomic scope" value="Bacteria"/>
</dbReference>
<dbReference type="InParanoid" id="O25396"/>
<dbReference type="OrthoDB" id="9809127at2"/>
<dbReference type="PhylomeDB" id="O25396"/>
<dbReference type="Proteomes" id="UP000000429">
    <property type="component" value="Chromosome"/>
</dbReference>
<dbReference type="GO" id="GO:0005886">
    <property type="term" value="C:plasma membrane"/>
    <property type="evidence" value="ECO:0000318"/>
    <property type="project" value="GO_Central"/>
</dbReference>
<dbReference type="GO" id="GO:0005524">
    <property type="term" value="F:ATP binding"/>
    <property type="evidence" value="ECO:0007669"/>
    <property type="project" value="UniProtKB-KW"/>
</dbReference>
<dbReference type="GO" id="GO:0015093">
    <property type="term" value="F:ferrous iron transmembrane transporter activity"/>
    <property type="evidence" value="ECO:0000318"/>
    <property type="project" value="GO_Central"/>
</dbReference>
<dbReference type="GO" id="GO:0005525">
    <property type="term" value="F:GTP binding"/>
    <property type="evidence" value="ECO:0007669"/>
    <property type="project" value="UniProtKB-KW"/>
</dbReference>
<dbReference type="CDD" id="cd01879">
    <property type="entry name" value="FeoB"/>
    <property type="match status" value="1"/>
</dbReference>
<dbReference type="Gene3D" id="3.40.50.300">
    <property type="entry name" value="P-loop containing nucleotide triphosphate hydrolases"/>
    <property type="match status" value="1"/>
</dbReference>
<dbReference type="InterPro" id="IPR003373">
    <property type="entry name" value="Fe2_transport_prot-B"/>
</dbReference>
<dbReference type="InterPro" id="IPR011640">
    <property type="entry name" value="Fe2_transport_prot_B_C"/>
</dbReference>
<dbReference type="InterPro" id="IPR050860">
    <property type="entry name" value="FeoB_GTPase"/>
</dbReference>
<dbReference type="InterPro" id="IPR030389">
    <property type="entry name" value="G_FEOB_dom"/>
</dbReference>
<dbReference type="InterPro" id="IPR011642">
    <property type="entry name" value="Gate_dom"/>
</dbReference>
<dbReference type="InterPro" id="IPR027417">
    <property type="entry name" value="P-loop_NTPase"/>
</dbReference>
<dbReference type="NCBIfam" id="TIGR00437">
    <property type="entry name" value="feoB"/>
    <property type="match status" value="1"/>
</dbReference>
<dbReference type="PANTHER" id="PTHR43185:SF1">
    <property type="entry name" value="FE(2+) TRANSPORTER FEOB"/>
    <property type="match status" value="1"/>
</dbReference>
<dbReference type="PANTHER" id="PTHR43185">
    <property type="entry name" value="FERROUS IRON TRANSPORT PROTEIN B"/>
    <property type="match status" value="1"/>
</dbReference>
<dbReference type="Pfam" id="PF07664">
    <property type="entry name" value="FeoB_C"/>
    <property type="match status" value="1"/>
</dbReference>
<dbReference type="Pfam" id="PF02421">
    <property type="entry name" value="FeoB_N"/>
    <property type="match status" value="1"/>
</dbReference>
<dbReference type="Pfam" id="PF07670">
    <property type="entry name" value="Gate"/>
    <property type="match status" value="2"/>
</dbReference>
<dbReference type="SUPFAM" id="SSF52540">
    <property type="entry name" value="P-loop containing nucleoside triphosphate hydrolases"/>
    <property type="match status" value="1"/>
</dbReference>
<dbReference type="PROSITE" id="PS51711">
    <property type="entry name" value="G_FEOB"/>
    <property type="match status" value="1"/>
</dbReference>
<gene>
    <name type="primary">feoB</name>
    <name type="ordered locus">HP_0687</name>
</gene>
<sequence length="642" mass="71423">MKEITIALVGQPNVGKSSLINALSNAHLKVGNFAGVTVDKMEVGLIHKEHQITIIDLPGTYALNDFTTEEKVTKDFLEKGQYDLILNVVDSTNLERNLALSAQLLDTNKKMLLALNMWDEAQKEGIKINTEKLSKELGVVCVPTSARSKEDRLNTELLLDEIVRLYSQNTTNNENIKVPSQSFKESLKYSQSAQRIAQLVISENQQNASFEHTYKIDKILMHKRYGIFIFLGFMFIIFSLSFLIGGGVQKALETGFKFLSDGIKENVANEDLASLVGDGIIGGVGATVSFLPLIVVLYFGISLLETTGYMSRVAFLLDGILHKFGLHGKSFIPLITGFGCSVPAYMATRTLQNYNERLITLFVIGFMSCSARLPIYVLFVGSFFPSSSAGFVLFCIYILGAVVALVMAKLLKLSVFKGQTESFIMEMPKYRFPSWRMVYFSIYTKSLSYLKKAGTYILVGAILIWFMSQYPKSDAAMKAYKQESLLVNKDTTLSSEAKEEKLKELKTELDKKNLKNSIVGRGGAYLEKVFSPMDFDWRLSVSLVTGFMAKEVVVSTLGVLFSLGDQNEKSDAFRGILRKEVSVPSGIAFIVFVMFYIPCFAATITFGREAGGIKFVAYLFIFTTVVAYAFSLIAFYATQILV</sequence>
<keyword id="KW-0067">ATP-binding</keyword>
<keyword id="KW-0997">Cell inner membrane</keyword>
<keyword id="KW-1003">Cell membrane</keyword>
<keyword id="KW-0342">GTP-binding</keyword>
<keyword id="KW-0406">Ion transport</keyword>
<keyword id="KW-0408">Iron</keyword>
<keyword id="KW-0410">Iron transport</keyword>
<keyword id="KW-0472">Membrane</keyword>
<keyword id="KW-0547">Nucleotide-binding</keyword>
<keyword id="KW-1185">Reference proteome</keyword>
<keyword id="KW-0812">Transmembrane</keyword>
<keyword id="KW-1133">Transmembrane helix</keyword>
<keyword id="KW-0813">Transport</keyword>
<proteinExistence type="inferred from homology"/>
<evidence type="ECO:0000250" key="1">
    <source>
        <dbReference type="UniProtKB" id="P33650"/>
    </source>
</evidence>
<evidence type="ECO:0000255" key="2"/>
<evidence type="ECO:0000255" key="3">
    <source>
        <dbReference type="PROSITE-ProRule" id="PRU01048"/>
    </source>
</evidence>
<evidence type="ECO:0000269" key="4">
    <source>
    </source>
</evidence>
<evidence type="ECO:0000305" key="5"/>
<feature type="chain" id="PRO_0000210830" description="Fe(2+) transporter FeoB">
    <location>
        <begin position="1"/>
        <end position="642"/>
    </location>
</feature>
<feature type="transmembrane region" description="Helical" evidence="2">
    <location>
        <begin position="226"/>
        <end position="246"/>
    </location>
</feature>
<feature type="transmembrane region" description="Helical" evidence="2">
    <location>
        <begin position="279"/>
        <end position="299"/>
    </location>
</feature>
<feature type="transmembrane region" description="Helical" evidence="2">
    <location>
        <begin position="361"/>
        <end position="381"/>
    </location>
</feature>
<feature type="transmembrane region" description="Helical" evidence="2">
    <location>
        <begin position="388"/>
        <end position="408"/>
    </location>
</feature>
<feature type="transmembrane region" description="Helical" evidence="2">
    <location>
        <begin position="447"/>
        <end position="467"/>
    </location>
</feature>
<feature type="transmembrane region" description="Helical" evidence="2">
    <location>
        <begin position="541"/>
        <end position="561"/>
    </location>
</feature>
<feature type="transmembrane region" description="Helical" evidence="2">
    <location>
        <begin position="586"/>
        <end position="606"/>
    </location>
</feature>
<feature type="transmembrane region" description="Helical" evidence="2">
    <location>
        <begin position="615"/>
        <end position="635"/>
    </location>
</feature>
<feature type="domain" description="FeoB-type G" evidence="3">
    <location>
        <begin position="3"/>
        <end position="168"/>
    </location>
</feature>
<feature type="binding site" evidence="3">
    <location>
        <begin position="10"/>
        <end position="17"/>
    </location>
    <ligand>
        <name>GTP</name>
        <dbReference type="ChEBI" id="CHEBI:37565"/>
        <label>1</label>
    </ligand>
</feature>
<feature type="binding site" evidence="3">
    <location>
        <begin position="35"/>
        <end position="39"/>
    </location>
    <ligand>
        <name>GTP</name>
        <dbReference type="ChEBI" id="CHEBI:37565"/>
        <label>2</label>
    </ligand>
</feature>
<feature type="binding site" evidence="3">
    <location>
        <begin position="56"/>
        <end position="59"/>
    </location>
    <ligand>
        <name>GTP</name>
        <dbReference type="ChEBI" id="CHEBI:37565"/>
        <label>3</label>
    </ligand>
</feature>
<feature type="binding site" evidence="3">
    <location>
        <begin position="116"/>
        <end position="119"/>
    </location>
    <ligand>
        <name>GTP</name>
        <dbReference type="ChEBI" id="CHEBI:37565"/>
    </ligand>
</feature>
<feature type="binding site" evidence="3">
    <location>
        <begin position="145"/>
        <end position="147"/>
    </location>
    <ligand>
        <name>GTP</name>
        <dbReference type="ChEBI" id="CHEBI:37565"/>
    </ligand>
</feature>
<organism>
    <name type="scientific">Helicobacter pylori (strain ATCC 700392 / 26695)</name>
    <name type="common">Campylobacter pylori</name>
    <dbReference type="NCBI Taxonomy" id="85962"/>
    <lineage>
        <taxon>Bacteria</taxon>
        <taxon>Pseudomonadati</taxon>
        <taxon>Campylobacterota</taxon>
        <taxon>Epsilonproteobacteria</taxon>
        <taxon>Campylobacterales</taxon>
        <taxon>Helicobacteraceae</taxon>
        <taxon>Helicobacter</taxon>
    </lineage>
</organism>
<reference key="1">
    <citation type="journal article" date="1997" name="Nature">
        <title>The complete genome sequence of the gastric pathogen Helicobacter pylori.</title>
        <authorList>
            <person name="Tomb J.-F."/>
            <person name="White O."/>
            <person name="Kerlavage A.R."/>
            <person name="Clayton R.A."/>
            <person name="Sutton G.G."/>
            <person name="Fleischmann R.D."/>
            <person name="Ketchum K.A."/>
            <person name="Klenk H.-P."/>
            <person name="Gill S.R."/>
            <person name="Dougherty B.A."/>
            <person name="Nelson K.E."/>
            <person name="Quackenbush J."/>
            <person name="Zhou L."/>
            <person name="Kirkness E.F."/>
            <person name="Peterson S.N."/>
            <person name="Loftus B.J."/>
            <person name="Richardson D.L."/>
            <person name="Dodson R.J."/>
            <person name="Khalak H.G."/>
            <person name="Glodek A."/>
            <person name="McKenney K."/>
            <person name="FitzGerald L.M."/>
            <person name="Lee N."/>
            <person name="Adams M.D."/>
            <person name="Hickey E.K."/>
            <person name="Berg D.E."/>
            <person name="Gocayne J.D."/>
            <person name="Utterback T.R."/>
            <person name="Peterson J.D."/>
            <person name="Kelley J.M."/>
            <person name="Cotton M.D."/>
            <person name="Weidman J.F."/>
            <person name="Fujii C."/>
            <person name="Bowman C."/>
            <person name="Watthey L."/>
            <person name="Wallin E."/>
            <person name="Hayes W.S."/>
            <person name="Borodovsky M."/>
            <person name="Karp P.D."/>
            <person name="Smith H.O."/>
            <person name="Fraser C.M."/>
            <person name="Venter J.C."/>
        </authorList>
    </citation>
    <scope>NUCLEOTIDE SEQUENCE [LARGE SCALE GENOMIC DNA]</scope>
    <source>
        <strain>ATCC 700392 / 26695</strain>
    </source>
</reference>
<reference key="2">
    <citation type="journal article" date="2000" name="Mol. Microbiol.">
        <title>Iron acquisition and virulence in Helicobacter pylori: a major role for FeoB, a high-affinity ferrous iron transporter.</title>
        <authorList>
            <person name="Velayudhan J."/>
            <person name="Hughes N.J."/>
            <person name="McColm A.A."/>
            <person name="Bagshaw J."/>
            <person name="Clayton C.L."/>
            <person name="Andrews S.C."/>
            <person name="Kelly D.J."/>
        </authorList>
    </citation>
    <scope>FUNCTION</scope>
    <scope>DISRUPTION PHENOTYPE</scope>
    <source>
        <strain>ATCC 43504 / NCTC 11637 / JCM 7653 / RPH 13487</strain>
    </source>
</reference>
<name>FEOB_HELPY</name>
<accession>O25396</accession>